<comment type="function">
    <text evidence="1">Catalyzes the reversible transfer of the CoA moiety from gamma-butyrobetainyl-CoA to L-carnitine to generate L-carnitinyl-CoA and gamma-butyrobetaine. Is also able to catalyze the reversible transfer of the CoA moiety from gamma-butyrobetainyl-CoA or L-carnitinyl-CoA to crotonobetaine to generate crotonobetainyl-CoA.</text>
</comment>
<comment type="catalytic activity">
    <reaction evidence="1">
        <text>crotonobetainyl-CoA + (R)-carnitine = crotonobetaine + (R)-carnitinyl-CoA</text>
        <dbReference type="Rhea" id="RHEA:28526"/>
        <dbReference type="ChEBI" id="CHEBI:16347"/>
        <dbReference type="ChEBI" id="CHEBI:17237"/>
        <dbReference type="ChEBI" id="CHEBI:60932"/>
        <dbReference type="ChEBI" id="CHEBI:60933"/>
        <dbReference type="EC" id="2.8.3.21"/>
    </reaction>
</comment>
<comment type="catalytic activity">
    <reaction evidence="1">
        <text>4-(trimethylamino)butanoyl-CoA + (R)-carnitine = (R)-carnitinyl-CoA + 4-(trimethylamino)butanoate</text>
        <dbReference type="Rhea" id="RHEA:28418"/>
        <dbReference type="ChEBI" id="CHEBI:16244"/>
        <dbReference type="ChEBI" id="CHEBI:16347"/>
        <dbReference type="ChEBI" id="CHEBI:60932"/>
        <dbReference type="ChEBI" id="CHEBI:61513"/>
        <dbReference type="EC" id="2.8.3.21"/>
    </reaction>
</comment>
<comment type="pathway">
    <text evidence="1">Amine and polyamine metabolism; carnitine metabolism.</text>
</comment>
<comment type="subunit">
    <text evidence="1">Homodimer.</text>
</comment>
<comment type="subcellular location">
    <subcellularLocation>
        <location evidence="1">Cytoplasm</location>
    </subcellularLocation>
</comment>
<comment type="similarity">
    <text evidence="1">Belongs to the CoA-transferase III family. CaiB subfamily.</text>
</comment>
<dbReference type="EC" id="2.8.3.21" evidence="1"/>
<dbReference type="EMBL" id="CP000468">
    <property type="protein sequence ID" value="ABI99527.1"/>
    <property type="molecule type" value="Genomic_DNA"/>
</dbReference>
<dbReference type="RefSeq" id="WP_000349942.1">
    <property type="nucleotide sequence ID" value="NZ_CADILS010000013.1"/>
</dbReference>
<dbReference type="SMR" id="A1A788"/>
<dbReference type="KEGG" id="ecv:APECO1_1943"/>
<dbReference type="HOGENOM" id="CLU_033975_2_0_6"/>
<dbReference type="UniPathway" id="UPA00117"/>
<dbReference type="Proteomes" id="UP000008216">
    <property type="component" value="Chromosome"/>
</dbReference>
<dbReference type="GO" id="GO:0005737">
    <property type="term" value="C:cytoplasm"/>
    <property type="evidence" value="ECO:0007669"/>
    <property type="project" value="UniProtKB-SubCell"/>
</dbReference>
<dbReference type="GO" id="GO:0008735">
    <property type="term" value="F:L-carnitine CoA-transferase activity"/>
    <property type="evidence" value="ECO:0007669"/>
    <property type="project" value="RHEA"/>
</dbReference>
<dbReference type="GO" id="GO:0009437">
    <property type="term" value="P:carnitine metabolic process"/>
    <property type="evidence" value="ECO:0007669"/>
    <property type="project" value="UniProtKB-UniRule"/>
</dbReference>
<dbReference type="FunFam" id="3.30.1540.10:FF:000001">
    <property type="entry name" value="L-carnitine CoA-transferase"/>
    <property type="match status" value="1"/>
</dbReference>
<dbReference type="Gene3D" id="3.40.50.10540">
    <property type="entry name" value="Crotonobetainyl-coa:carnitine coa-transferase, domain 1"/>
    <property type="match status" value="1"/>
</dbReference>
<dbReference type="Gene3D" id="3.30.1540.10">
    <property type="entry name" value="formyl-coa transferase, domain 3"/>
    <property type="match status" value="1"/>
</dbReference>
<dbReference type="HAMAP" id="MF_01050">
    <property type="entry name" value="CaiB"/>
    <property type="match status" value="1"/>
</dbReference>
<dbReference type="InterPro" id="IPR050509">
    <property type="entry name" value="CoA-transferase_III"/>
</dbReference>
<dbReference type="InterPro" id="IPR023452">
    <property type="entry name" value="CoA-Trfase_CaiB"/>
</dbReference>
<dbReference type="InterPro" id="IPR003673">
    <property type="entry name" value="CoA-Trfase_fam_III"/>
</dbReference>
<dbReference type="InterPro" id="IPR044855">
    <property type="entry name" value="CoA-Trfase_III_dom3_sf"/>
</dbReference>
<dbReference type="InterPro" id="IPR023606">
    <property type="entry name" value="CoA-Trfase_III_dom_1_sf"/>
</dbReference>
<dbReference type="NCBIfam" id="NF002914">
    <property type="entry name" value="PRK03525.1"/>
    <property type="match status" value="1"/>
</dbReference>
<dbReference type="PANTHER" id="PTHR48228:SF6">
    <property type="entry name" value="L-CARNITINE COA-TRANSFERASE"/>
    <property type="match status" value="1"/>
</dbReference>
<dbReference type="PANTHER" id="PTHR48228">
    <property type="entry name" value="SUCCINYL-COA--D-CITRAMALATE COA-TRANSFERASE"/>
    <property type="match status" value="1"/>
</dbReference>
<dbReference type="Pfam" id="PF02515">
    <property type="entry name" value="CoA_transf_3"/>
    <property type="match status" value="1"/>
</dbReference>
<dbReference type="SUPFAM" id="SSF89796">
    <property type="entry name" value="CoA-transferase family III (CaiB/BaiF)"/>
    <property type="match status" value="1"/>
</dbReference>
<organism>
    <name type="scientific">Escherichia coli O1:K1 / APEC</name>
    <dbReference type="NCBI Taxonomy" id="405955"/>
    <lineage>
        <taxon>Bacteria</taxon>
        <taxon>Pseudomonadati</taxon>
        <taxon>Pseudomonadota</taxon>
        <taxon>Gammaproteobacteria</taxon>
        <taxon>Enterobacterales</taxon>
        <taxon>Enterobacteriaceae</taxon>
        <taxon>Escherichia</taxon>
    </lineage>
</organism>
<sequence length="405" mass="45053">MDHLPMPKFGPLAGLRVVFSGIEIAGPFAGQMFAEWGAEVIWIENVAWADTIRVQPNYPQLSRRNLHALSLNIFKDEGREAFLKLMETTDIFIEASKGPAFARRGITDEVLWQHNPKLVIAHLSGFGQYGTEEYTNLPAYNTIAQAFSGYLIQNGDVDQPMPAFPYTADYFSGLTATTAALAALHKVRETGKGESIDIAMYEVMLRMGQYFMMDYFNGGEMCPRMTKGKDPYYAGCGLYKCADGYIVMELVGITQIAECFKDIGLAHLLGTPEIPEGTQLIHRIECPYGPLVEEKLDAWLAAHTIAEVKERFAELNIACAKVLTVPELESNPQYVARESITQWQTMDGRTCKGPNIMPKFKNNPGQIWRGMPSHGMDTAAILKNIGYSENDIQELVSKGLAKVED</sequence>
<evidence type="ECO:0000255" key="1">
    <source>
        <dbReference type="HAMAP-Rule" id="MF_01050"/>
    </source>
</evidence>
<name>CAIB_ECOK1</name>
<accession>A1A788</accession>
<proteinExistence type="inferred from homology"/>
<feature type="chain" id="PRO_0000300979" description="L-carnitine CoA-transferase">
    <location>
        <begin position="1"/>
        <end position="405"/>
    </location>
</feature>
<feature type="active site" description="Nucleophile" evidence="1">
    <location>
        <position position="169"/>
    </location>
</feature>
<feature type="binding site" evidence="1">
    <location>
        <position position="97"/>
    </location>
    <ligand>
        <name>CoA</name>
        <dbReference type="ChEBI" id="CHEBI:57287"/>
    </ligand>
</feature>
<feature type="binding site" evidence="1">
    <location>
        <position position="104"/>
    </location>
    <ligand>
        <name>CoA</name>
        <dbReference type="ChEBI" id="CHEBI:57287"/>
    </ligand>
</feature>
<keyword id="KW-0963">Cytoplasm</keyword>
<keyword id="KW-1185">Reference proteome</keyword>
<keyword id="KW-0808">Transferase</keyword>
<protein>
    <recommendedName>
        <fullName evidence="1">L-carnitine CoA-transferase</fullName>
        <ecNumber evidence="1">2.8.3.21</ecNumber>
    </recommendedName>
    <alternativeName>
        <fullName evidence="1">Crotonobetainyl-CoA:carnitine CoA-transferase</fullName>
    </alternativeName>
</protein>
<reference key="1">
    <citation type="journal article" date="2007" name="J. Bacteriol.">
        <title>The genome sequence of avian pathogenic Escherichia coli strain O1:K1:H7 shares strong similarities with human extraintestinal pathogenic E. coli genomes.</title>
        <authorList>
            <person name="Johnson T.J."/>
            <person name="Kariyawasam S."/>
            <person name="Wannemuehler Y."/>
            <person name="Mangiamele P."/>
            <person name="Johnson S.J."/>
            <person name="Doetkott C."/>
            <person name="Skyberg J.A."/>
            <person name="Lynne A.M."/>
            <person name="Johnson J.R."/>
            <person name="Nolan L.K."/>
        </authorList>
    </citation>
    <scope>NUCLEOTIDE SEQUENCE [LARGE SCALE GENOMIC DNA]</scope>
</reference>
<gene>
    <name evidence="1" type="primary">caiB</name>
    <name type="ordered locus">Ecok1_00340</name>
    <name type="ORF">APECO1_1943</name>
</gene>